<feature type="chain" id="PRO_1000089222" description="Endoribonuclease YbeY">
    <location>
        <begin position="1"/>
        <end position="159"/>
    </location>
</feature>
<feature type="binding site" evidence="1">
    <location>
        <position position="125"/>
    </location>
    <ligand>
        <name>Zn(2+)</name>
        <dbReference type="ChEBI" id="CHEBI:29105"/>
        <note>catalytic</note>
    </ligand>
</feature>
<feature type="binding site" evidence="1">
    <location>
        <position position="129"/>
    </location>
    <ligand>
        <name>Zn(2+)</name>
        <dbReference type="ChEBI" id="CHEBI:29105"/>
        <note>catalytic</note>
    </ligand>
</feature>
<feature type="binding site" evidence="1">
    <location>
        <position position="135"/>
    </location>
    <ligand>
        <name>Zn(2+)</name>
        <dbReference type="ChEBI" id="CHEBI:29105"/>
        <note>catalytic</note>
    </ligand>
</feature>
<gene>
    <name evidence="1" type="primary">ybeY</name>
    <name type="ordered locus">Teth514_1342</name>
</gene>
<accession>B0K706</accession>
<keyword id="KW-0963">Cytoplasm</keyword>
<keyword id="KW-0255">Endonuclease</keyword>
<keyword id="KW-0378">Hydrolase</keyword>
<keyword id="KW-0479">Metal-binding</keyword>
<keyword id="KW-0540">Nuclease</keyword>
<keyword id="KW-0690">Ribosome biogenesis</keyword>
<keyword id="KW-0698">rRNA processing</keyword>
<keyword id="KW-0862">Zinc</keyword>
<evidence type="ECO:0000255" key="1">
    <source>
        <dbReference type="HAMAP-Rule" id="MF_00009"/>
    </source>
</evidence>
<name>YBEY_THEPX</name>
<reference key="1">
    <citation type="submission" date="2008-01" db="EMBL/GenBank/DDBJ databases">
        <title>Complete sequence of Thermoanaerobacter sp. X514.</title>
        <authorList>
            <consortium name="US DOE Joint Genome Institute"/>
            <person name="Copeland A."/>
            <person name="Lucas S."/>
            <person name="Lapidus A."/>
            <person name="Barry K."/>
            <person name="Glavina del Rio T."/>
            <person name="Dalin E."/>
            <person name="Tice H."/>
            <person name="Pitluck S."/>
            <person name="Bruce D."/>
            <person name="Goodwin L."/>
            <person name="Saunders E."/>
            <person name="Brettin T."/>
            <person name="Detter J.C."/>
            <person name="Han C."/>
            <person name="Schmutz J."/>
            <person name="Larimer F."/>
            <person name="Land M."/>
            <person name="Hauser L."/>
            <person name="Kyrpides N."/>
            <person name="Kim E."/>
            <person name="Hemme C."/>
            <person name="Fields M.W."/>
            <person name="He Z."/>
            <person name="Zhou J."/>
            <person name="Richardson P."/>
        </authorList>
    </citation>
    <scope>NUCLEOTIDE SEQUENCE [LARGE SCALE GENOMIC DNA]</scope>
    <source>
        <strain>X514</strain>
    </source>
</reference>
<proteinExistence type="inferred from homology"/>
<organism>
    <name type="scientific">Thermoanaerobacter sp. (strain X514)</name>
    <dbReference type="NCBI Taxonomy" id="399726"/>
    <lineage>
        <taxon>Bacteria</taxon>
        <taxon>Bacillati</taxon>
        <taxon>Bacillota</taxon>
        <taxon>Clostridia</taxon>
        <taxon>Thermoanaerobacterales</taxon>
        <taxon>Thermoanaerobacteraceae</taxon>
        <taxon>Thermoanaerobacter</taxon>
    </lineage>
</organism>
<dbReference type="EC" id="3.1.-.-" evidence="1"/>
<dbReference type="EMBL" id="CP000923">
    <property type="protein sequence ID" value="ABY92632.1"/>
    <property type="molecule type" value="Genomic_DNA"/>
</dbReference>
<dbReference type="RefSeq" id="WP_003867917.1">
    <property type="nucleotide sequence ID" value="NC_010320.1"/>
</dbReference>
<dbReference type="SMR" id="B0K706"/>
<dbReference type="KEGG" id="tex:Teth514_1342"/>
<dbReference type="HOGENOM" id="CLU_106710_3_0_9"/>
<dbReference type="Proteomes" id="UP000002155">
    <property type="component" value="Chromosome"/>
</dbReference>
<dbReference type="GO" id="GO:0005737">
    <property type="term" value="C:cytoplasm"/>
    <property type="evidence" value="ECO:0007669"/>
    <property type="project" value="UniProtKB-SubCell"/>
</dbReference>
<dbReference type="GO" id="GO:0004222">
    <property type="term" value="F:metalloendopeptidase activity"/>
    <property type="evidence" value="ECO:0007669"/>
    <property type="project" value="InterPro"/>
</dbReference>
<dbReference type="GO" id="GO:0004521">
    <property type="term" value="F:RNA endonuclease activity"/>
    <property type="evidence" value="ECO:0007669"/>
    <property type="project" value="UniProtKB-UniRule"/>
</dbReference>
<dbReference type="GO" id="GO:0008270">
    <property type="term" value="F:zinc ion binding"/>
    <property type="evidence" value="ECO:0007669"/>
    <property type="project" value="UniProtKB-UniRule"/>
</dbReference>
<dbReference type="GO" id="GO:0006364">
    <property type="term" value="P:rRNA processing"/>
    <property type="evidence" value="ECO:0007669"/>
    <property type="project" value="UniProtKB-UniRule"/>
</dbReference>
<dbReference type="Gene3D" id="3.40.390.30">
    <property type="entry name" value="Metalloproteases ('zincins'), catalytic domain"/>
    <property type="match status" value="1"/>
</dbReference>
<dbReference type="HAMAP" id="MF_00009">
    <property type="entry name" value="Endoribonucl_YbeY"/>
    <property type="match status" value="1"/>
</dbReference>
<dbReference type="InterPro" id="IPR023091">
    <property type="entry name" value="MetalPrtase_cat_dom_sf_prd"/>
</dbReference>
<dbReference type="InterPro" id="IPR002036">
    <property type="entry name" value="YbeY"/>
</dbReference>
<dbReference type="InterPro" id="IPR020549">
    <property type="entry name" value="YbeY_CS"/>
</dbReference>
<dbReference type="NCBIfam" id="TIGR00043">
    <property type="entry name" value="rRNA maturation RNase YbeY"/>
    <property type="match status" value="1"/>
</dbReference>
<dbReference type="PANTHER" id="PTHR46986">
    <property type="entry name" value="ENDORIBONUCLEASE YBEY, CHLOROPLASTIC"/>
    <property type="match status" value="1"/>
</dbReference>
<dbReference type="PANTHER" id="PTHR46986:SF1">
    <property type="entry name" value="ENDORIBONUCLEASE YBEY, CHLOROPLASTIC"/>
    <property type="match status" value="1"/>
</dbReference>
<dbReference type="Pfam" id="PF02130">
    <property type="entry name" value="YbeY"/>
    <property type="match status" value="1"/>
</dbReference>
<dbReference type="SUPFAM" id="SSF55486">
    <property type="entry name" value="Metalloproteases ('zincins'), catalytic domain"/>
    <property type="match status" value="1"/>
</dbReference>
<dbReference type="PROSITE" id="PS01306">
    <property type="entry name" value="UPF0054"/>
    <property type="match status" value="1"/>
</dbReference>
<comment type="function">
    <text evidence="1">Single strand-specific metallo-endoribonuclease involved in late-stage 70S ribosome quality control and in maturation of the 3' terminus of the 16S rRNA.</text>
</comment>
<comment type="cofactor">
    <cofactor evidence="1">
        <name>Zn(2+)</name>
        <dbReference type="ChEBI" id="CHEBI:29105"/>
    </cofactor>
    <text evidence="1">Binds 1 zinc ion.</text>
</comment>
<comment type="subcellular location">
    <subcellularLocation>
        <location evidence="1">Cytoplasm</location>
    </subcellularLocation>
</comment>
<comment type="similarity">
    <text evidence="1">Belongs to the endoribonuclease YbeY family.</text>
</comment>
<sequence length="159" mass="18549">MNILIDNRQDKVDAINLEELVEKVIKTVLEVEEVIDNVEVSVSFVDNEEIRKLNKYYRGIDKPTDVLSFPLAEFEDTYGEVEEIEEDSEEVQPIGDIVISLEKALEQSMEYGHSFEREVAYLTAHSMLHLLGYDHETEEERKIMREKEEEVMARLNIGR</sequence>
<protein>
    <recommendedName>
        <fullName evidence="1">Endoribonuclease YbeY</fullName>
        <ecNumber evidence="1">3.1.-.-</ecNumber>
    </recommendedName>
</protein>